<comment type="similarity">
    <text evidence="1">Belongs to the bacterial ribosomal protein bL32 family.</text>
</comment>
<proteinExistence type="inferred from homology"/>
<name>RL32_SHEPW</name>
<sequence>MAVQQNKKSRSKRGMRRSHDSLSTAQLSVDATSGELHRRHNVTADGFYRGQKVINK</sequence>
<reference key="1">
    <citation type="journal article" date="2008" name="PLoS ONE">
        <title>Environmental adaptation: genomic analysis of the piezotolerant and psychrotolerant deep-sea iron reducing bacterium Shewanella piezotolerans WP3.</title>
        <authorList>
            <person name="Wang F."/>
            <person name="Wang J."/>
            <person name="Jian H."/>
            <person name="Zhang B."/>
            <person name="Li S."/>
            <person name="Wang F."/>
            <person name="Zeng X."/>
            <person name="Gao L."/>
            <person name="Bartlett D.H."/>
            <person name="Yu J."/>
            <person name="Hu S."/>
            <person name="Xiao X."/>
        </authorList>
    </citation>
    <scope>NUCLEOTIDE SEQUENCE [LARGE SCALE GENOMIC DNA]</scope>
    <source>
        <strain>WP3 / JCM 13877</strain>
    </source>
</reference>
<feature type="chain" id="PRO_1000120171" description="Large ribosomal subunit protein bL32">
    <location>
        <begin position="1"/>
        <end position="56"/>
    </location>
</feature>
<feature type="region of interest" description="Disordered" evidence="2">
    <location>
        <begin position="1"/>
        <end position="39"/>
    </location>
</feature>
<feature type="compositionally biased region" description="Basic residues" evidence="2">
    <location>
        <begin position="7"/>
        <end position="16"/>
    </location>
</feature>
<feature type="compositionally biased region" description="Polar residues" evidence="2">
    <location>
        <begin position="21"/>
        <end position="31"/>
    </location>
</feature>
<dbReference type="EMBL" id="CP000472">
    <property type="protein sequence ID" value="ACJ29767.1"/>
    <property type="molecule type" value="Genomic_DNA"/>
</dbReference>
<dbReference type="RefSeq" id="WP_020913118.1">
    <property type="nucleotide sequence ID" value="NC_011566.1"/>
</dbReference>
<dbReference type="SMR" id="B8CR95"/>
<dbReference type="STRING" id="225849.swp_3049"/>
<dbReference type="KEGG" id="swp:swp_3049"/>
<dbReference type="eggNOG" id="COG0333">
    <property type="taxonomic scope" value="Bacteria"/>
</dbReference>
<dbReference type="HOGENOM" id="CLU_129084_2_1_6"/>
<dbReference type="OrthoDB" id="9801927at2"/>
<dbReference type="Proteomes" id="UP000000753">
    <property type="component" value="Chromosome"/>
</dbReference>
<dbReference type="GO" id="GO:0015934">
    <property type="term" value="C:large ribosomal subunit"/>
    <property type="evidence" value="ECO:0007669"/>
    <property type="project" value="InterPro"/>
</dbReference>
<dbReference type="GO" id="GO:0003735">
    <property type="term" value="F:structural constituent of ribosome"/>
    <property type="evidence" value="ECO:0007669"/>
    <property type="project" value="InterPro"/>
</dbReference>
<dbReference type="GO" id="GO:0006412">
    <property type="term" value="P:translation"/>
    <property type="evidence" value="ECO:0007669"/>
    <property type="project" value="UniProtKB-UniRule"/>
</dbReference>
<dbReference type="HAMAP" id="MF_00340">
    <property type="entry name" value="Ribosomal_bL32"/>
    <property type="match status" value="1"/>
</dbReference>
<dbReference type="InterPro" id="IPR002677">
    <property type="entry name" value="Ribosomal_bL32"/>
</dbReference>
<dbReference type="InterPro" id="IPR044957">
    <property type="entry name" value="Ribosomal_bL32_bact"/>
</dbReference>
<dbReference type="InterPro" id="IPR011332">
    <property type="entry name" value="Ribosomal_zn-bd"/>
</dbReference>
<dbReference type="NCBIfam" id="TIGR01031">
    <property type="entry name" value="rpmF_bact"/>
    <property type="match status" value="1"/>
</dbReference>
<dbReference type="PANTHER" id="PTHR35534">
    <property type="entry name" value="50S RIBOSOMAL PROTEIN L32"/>
    <property type="match status" value="1"/>
</dbReference>
<dbReference type="PANTHER" id="PTHR35534:SF1">
    <property type="entry name" value="LARGE RIBOSOMAL SUBUNIT PROTEIN BL32"/>
    <property type="match status" value="1"/>
</dbReference>
<dbReference type="Pfam" id="PF01783">
    <property type="entry name" value="Ribosomal_L32p"/>
    <property type="match status" value="1"/>
</dbReference>
<dbReference type="SUPFAM" id="SSF57829">
    <property type="entry name" value="Zn-binding ribosomal proteins"/>
    <property type="match status" value="1"/>
</dbReference>
<keyword id="KW-0687">Ribonucleoprotein</keyword>
<keyword id="KW-0689">Ribosomal protein</keyword>
<protein>
    <recommendedName>
        <fullName evidence="1">Large ribosomal subunit protein bL32</fullName>
    </recommendedName>
    <alternativeName>
        <fullName evidence="3">50S ribosomal protein L32</fullName>
    </alternativeName>
</protein>
<accession>B8CR95</accession>
<evidence type="ECO:0000255" key="1">
    <source>
        <dbReference type="HAMAP-Rule" id="MF_00340"/>
    </source>
</evidence>
<evidence type="ECO:0000256" key="2">
    <source>
        <dbReference type="SAM" id="MobiDB-lite"/>
    </source>
</evidence>
<evidence type="ECO:0000305" key="3"/>
<gene>
    <name evidence="1" type="primary">rpmF</name>
    <name type="ordered locus">swp_3049</name>
</gene>
<organism>
    <name type="scientific">Shewanella piezotolerans (strain WP3 / JCM 13877)</name>
    <dbReference type="NCBI Taxonomy" id="225849"/>
    <lineage>
        <taxon>Bacteria</taxon>
        <taxon>Pseudomonadati</taxon>
        <taxon>Pseudomonadota</taxon>
        <taxon>Gammaproteobacteria</taxon>
        <taxon>Alteromonadales</taxon>
        <taxon>Shewanellaceae</taxon>
        <taxon>Shewanella</taxon>
    </lineage>
</organism>